<comment type="function">
    <text evidence="2">Component of the ubiquinol-cytochrome c reductase complex (complex III or cytochrome b-c1 complex) that is part of the mitochondrial respiratory chain. The b-c1 complex mediates electron transfer from ubiquinol to cytochrome c. Contributes to the generation of a proton gradient across the mitochondrial membrane that is then used for ATP synthesis.</text>
</comment>
<comment type="cofactor">
    <cofactor evidence="2">
        <name>heme b</name>
        <dbReference type="ChEBI" id="CHEBI:60344"/>
    </cofactor>
    <text evidence="2">Binds 2 heme b groups non-covalently.</text>
</comment>
<comment type="subunit">
    <text evidence="2">The cytochrome bc1 complex contains 11 subunits: 3 respiratory subunits (MT-CYB, CYC1 and UQCRFS1), 2 core proteins (UQCRC1 and UQCRC2) and 6 low-molecular weight proteins (UQCRH/QCR6, UQCRB/QCR7, UQCRQ/QCR8, UQCR10/QCR9, UQCR11/QCR10 and a cleavage product of UQCRFS1). This cytochrome bc1 complex then forms a dimer.</text>
</comment>
<comment type="subcellular location">
    <subcellularLocation>
        <location evidence="2">Mitochondrion inner membrane</location>
        <topology evidence="2">Multi-pass membrane protein</topology>
    </subcellularLocation>
</comment>
<comment type="miscellaneous">
    <text evidence="1">Heme 1 (or BL or b562) is low-potential and absorbs at about 562 nm, and heme 2 (or BH or b566) is high-potential and absorbs at about 566 nm.</text>
</comment>
<comment type="similarity">
    <text evidence="3 4">Belongs to the cytochrome b family.</text>
</comment>
<comment type="caution">
    <text evidence="2">The full-length protein contains only eight transmembrane helices, not nine as predicted by bioinformatics tools.</text>
</comment>
<feature type="chain" id="PRO_0000061540" description="Cytochrome b">
    <location>
        <begin position="1"/>
        <end position="381"/>
    </location>
</feature>
<feature type="transmembrane region" description="Helical" evidence="2">
    <location>
        <begin position="33"/>
        <end position="53"/>
    </location>
</feature>
<feature type="transmembrane region" description="Helical" evidence="2">
    <location>
        <begin position="77"/>
        <end position="98"/>
    </location>
</feature>
<feature type="transmembrane region" description="Helical" evidence="2">
    <location>
        <begin position="113"/>
        <end position="133"/>
    </location>
</feature>
<feature type="transmembrane region" description="Helical" evidence="2">
    <location>
        <begin position="178"/>
        <end position="198"/>
    </location>
</feature>
<feature type="transmembrane region" description="Helical" evidence="2">
    <location>
        <begin position="226"/>
        <end position="246"/>
    </location>
</feature>
<feature type="transmembrane region" description="Helical" evidence="2">
    <location>
        <begin position="288"/>
        <end position="308"/>
    </location>
</feature>
<feature type="transmembrane region" description="Helical" evidence="2">
    <location>
        <begin position="320"/>
        <end position="340"/>
    </location>
</feature>
<feature type="transmembrane region" description="Helical" evidence="2">
    <location>
        <begin position="347"/>
        <end position="367"/>
    </location>
</feature>
<feature type="binding site" description="axial binding residue" evidence="2">
    <location>
        <position position="83"/>
    </location>
    <ligand>
        <name>heme b</name>
        <dbReference type="ChEBI" id="CHEBI:60344"/>
        <label>b562</label>
    </ligand>
    <ligandPart>
        <name>Fe</name>
        <dbReference type="ChEBI" id="CHEBI:18248"/>
    </ligandPart>
</feature>
<feature type="binding site" description="axial binding residue" evidence="2">
    <location>
        <position position="97"/>
    </location>
    <ligand>
        <name>heme b</name>
        <dbReference type="ChEBI" id="CHEBI:60344"/>
        <label>b566</label>
    </ligand>
    <ligandPart>
        <name>Fe</name>
        <dbReference type="ChEBI" id="CHEBI:18248"/>
    </ligandPart>
</feature>
<feature type="binding site" description="axial binding residue" evidence="2">
    <location>
        <position position="182"/>
    </location>
    <ligand>
        <name>heme b</name>
        <dbReference type="ChEBI" id="CHEBI:60344"/>
        <label>b562</label>
    </ligand>
    <ligandPart>
        <name>Fe</name>
        <dbReference type="ChEBI" id="CHEBI:18248"/>
    </ligandPart>
</feature>
<feature type="binding site" description="axial binding residue" evidence="2">
    <location>
        <position position="196"/>
    </location>
    <ligand>
        <name>heme b</name>
        <dbReference type="ChEBI" id="CHEBI:60344"/>
        <label>b566</label>
    </ligand>
    <ligandPart>
        <name>Fe</name>
        <dbReference type="ChEBI" id="CHEBI:18248"/>
    </ligandPart>
</feature>
<protein>
    <recommendedName>
        <fullName>Cytochrome b</fullName>
    </recommendedName>
    <alternativeName>
        <fullName>Complex III subunit 3</fullName>
    </alternativeName>
    <alternativeName>
        <fullName>Complex III subunit III</fullName>
    </alternativeName>
    <alternativeName>
        <fullName>Cytochrome b-c1 complex subunit 3</fullName>
    </alternativeName>
    <alternativeName>
        <fullName>Ubiquinol-cytochrome-c reductase complex cytochrome b subunit</fullName>
    </alternativeName>
</protein>
<gene>
    <name type="primary">MT-CYB</name>
    <name type="synonym">COB</name>
    <name type="synonym">CYTB</name>
    <name type="synonym">MTCYB</name>
</gene>
<accession>Q9XP89</accession>
<reference key="1">
    <citation type="journal article" date="1999" name="Mol. Phylogenet. Evol.">
        <title>Systematic relationships within the dasyurid marsupial tribe Sminthopsini -- a multigene approach.</title>
        <authorList>
            <person name="Blacket M.J."/>
            <person name="Krajewski C."/>
            <person name="Labrinidis A."/>
            <person name="Cambron B."/>
            <person name="Cooper S."/>
            <person name="Westerman M."/>
        </authorList>
    </citation>
    <scope>NUCLEOTIDE SEQUENCE [GENOMIC DNA]</scope>
</reference>
<organism>
    <name type="scientific">Sminthopsis aitkeni</name>
    <name type="common">Kangaroo island dunnart</name>
    <dbReference type="NCBI Taxonomy" id="75753"/>
    <lineage>
        <taxon>Eukaryota</taxon>
        <taxon>Metazoa</taxon>
        <taxon>Chordata</taxon>
        <taxon>Craniata</taxon>
        <taxon>Vertebrata</taxon>
        <taxon>Euteleostomi</taxon>
        <taxon>Mammalia</taxon>
        <taxon>Metatheria</taxon>
        <taxon>Dasyuromorphia</taxon>
        <taxon>Dasyuridae</taxon>
        <taxon>Sminthopsis</taxon>
    </lineage>
</organism>
<proteinExistence type="inferred from homology"/>
<name>CYB_SMIAI</name>
<geneLocation type="mitochondrion"/>
<sequence length="381" mass="42849">MINLRKTHPLMKIVNHSFIDLPAPSNISAWWNFGSLLGVCLTIQILTGLFLAMHYTSDTLTAFSSVAHISRDVNYGWLIRNLHANGASMFFMCLFLHVGRGIYYGSYLYKETWNIGVILLLTVMATAFVGYVLPWGQMSFWGATMVTNLLSAIPYIGTTLAEWIWGGFSVDKATLTRFFAFHFILPFIIMALVIVHLLFLQETGSNNPSGINPDSDKIPFHPYYTIKDALGLMFLLLVLLTLVLFSPDSLGDPDNFSPANPLNTPPHIKPEWYFLFAYAILHSIPNKLGGVLALLASILILLIMPFLHTTNQGSMMFWPVSQTLFWILTANLITLTWIGGQPVEQPFIIIGQLASTLYFLLILILMTLAGLFENYMLKPKW</sequence>
<dbReference type="EMBL" id="AF088919">
    <property type="protein sequence ID" value="AAD38429.1"/>
    <property type="molecule type" value="Genomic_DNA"/>
</dbReference>
<dbReference type="SMR" id="Q9XP89"/>
<dbReference type="GO" id="GO:0005743">
    <property type="term" value="C:mitochondrial inner membrane"/>
    <property type="evidence" value="ECO:0007669"/>
    <property type="project" value="UniProtKB-SubCell"/>
</dbReference>
<dbReference type="GO" id="GO:0045275">
    <property type="term" value="C:respiratory chain complex III"/>
    <property type="evidence" value="ECO:0007669"/>
    <property type="project" value="InterPro"/>
</dbReference>
<dbReference type="GO" id="GO:0046872">
    <property type="term" value="F:metal ion binding"/>
    <property type="evidence" value="ECO:0007669"/>
    <property type="project" value="UniProtKB-KW"/>
</dbReference>
<dbReference type="GO" id="GO:0008121">
    <property type="term" value="F:ubiquinol-cytochrome-c reductase activity"/>
    <property type="evidence" value="ECO:0007669"/>
    <property type="project" value="InterPro"/>
</dbReference>
<dbReference type="GO" id="GO:0006122">
    <property type="term" value="P:mitochondrial electron transport, ubiquinol to cytochrome c"/>
    <property type="evidence" value="ECO:0007669"/>
    <property type="project" value="TreeGrafter"/>
</dbReference>
<dbReference type="CDD" id="cd00290">
    <property type="entry name" value="cytochrome_b_C"/>
    <property type="match status" value="1"/>
</dbReference>
<dbReference type="CDD" id="cd00284">
    <property type="entry name" value="Cytochrome_b_N"/>
    <property type="match status" value="1"/>
</dbReference>
<dbReference type="FunFam" id="1.20.810.10:FF:000002">
    <property type="entry name" value="Cytochrome b"/>
    <property type="match status" value="1"/>
</dbReference>
<dbReference type="Gene3D" id="1.20.810.10">
    <property type="entry name" value="Cytochrome Bc1 Complex, Chain C"/>
    <property type="match status" value="1"/>
</dbReference>
<dbReference type="InterPro" id="IPR005798">
    <property type="entry name" value="Cyt_b/b6_C"/>
</dbReference>
<dbReference type="InterPro" id="IPR036150">
    <property type="entry name" value="Cyt_b/b6_C_sf"/>
</dbReference>
<dbReference type="InterPro" id="IPR005797">
    <property type="entry name" value="Cyt_b/b6_N"/>
</dbReference>
<dbReference type="InterPro" id="IPR027387">
    <property type="entry name" value="Cytb/b6-like_sf"/>
</dbReference>
<dbReference type="InterPro" id="IPR030689">
    <property type="entry name" value="Cytochrome_b"/>
</dbReference>
<dbReference type="InterPro" id="IPR048260">
    <property type="entry name" value="Cytochrome_b_C_euk/bac"/>
</dbReference>
<dbReference type="InterPro" id="IPR048259">
    <property type="entry name" value="Cytochrome_b_N_euk/bac"/>
</dbReference>
<dbReference type="InterPro" id="IPR016174">
    <property type="entry name" value="Di-haem_cyt_TM"/>
</dbReference>
<dbReference type="PANTHER" id="PTHR19271">
    <property type="entry name" value="CYTOCHROME B"/>
    <property type="match status" value="1"/>
</dbReference>
<dbReference type="PANTHER" id="PTHR19271:SF16">
    <property type="entry name" value="CYTOCHROME B"/>
    <property type="match status" value="1"/>
</dbReference>
<dbReference type="Pfam" id="PF00032">
    <property type="entry name" value="Cytochrom_B_C"/>
    <property type="match status" value="1"/>
</dbReference>
<dbReference type="Pfam" id="PF00033">
    <property type="entry name" value="Cytochrome_B"/>
    <property type="match status" value="1"/>
</dbReference>
<dbReference type="PIRSF" id="PIRSF038885">
    <property type="entry name" value="COB"/>
    <property type="match status" value="1"/>
</dbReference>
<dbReference type="SUPFAM" id="SSF81648">
    <property type="entry name" value="a domain/subunit of cytochrome bc1 complex (Ubiquinol-cytochrome c reductase)"/>
    <property type="match status" value="1"/>
</dbReference>
<dbReference type="SUPFAM" id="SSF81342">
    <property type="entry name" value="Transmembrane di-heme cytochromes"/>
    <property type="match status" value="1"/>
</dbReference>
<dbReference type="PROSITE" id="PS51003">
    <property type="entry name" value="CYTB_CTER"/>
    <property type="match status" value="1"/>
</dbReference>
<dbReference type="PROSITE" id="PS51002">
    <property type="entry name" value="CYTB_NTER"/>
    <property type="match status" value="1"/>
</dbReference>
<evidence type="ECO:0000250" key="1"/>
<evidence type="ECO:0000250" key="2">
    <source>
        <dbReference type="UniProtKB" id="P00157"/>
    </source>
</evidence>
<evidence type="ECO:0000255" key="3">
    <source>
        <dbReference type="PROSITE-ProRule" id="PRU00967"/>
    </source>
</evidence>
<evidence type="ECO:0000255" key="4">
    <source>
        <dbReference type="PROSITE-ProRule" id="PRU00968"/>
    </source>
</evidence>
<keyword id="KW-0249">Electron transport</keyword>
<keyword id="KW-0349">Heme</keyword>
<keyword id="KW-0408">Iron</keyword>
<keyword id="KW-0472">Membrane</keyword>
<keyword id="KW-0479">Metal-binding</keyword>
<keyword id="KW-0496">Mitochondrion</keyword>
<keyword id="KW-0999">Mitochondrion inner membrane</keyword>
<keyword id="KW-0679">Respiratory chain</keyword>
<keyword id="KW-0812">Transmembrane</keyword>
<keyword id="KW-1133">Transmembrane helix</keyword>
<keyword id="KW-0813">Transport</keyword>
<keyword id="KW-0830">Ubiquinone</keyword>